<accession>Q9SVM0</accession>
<keyword id="KW-1185">Reference proteome</keyword>
<keyword id="KW-0833">Ubl conjugation pathway</keyword>
<dbReference type="EMBL" id="AL049862">
    <property type="protein sequence ID" value="CAB42907.1"/>
    <property type="molecule type" value="Genomic_DNA"/>
</dbReference>
<dbReference type="EMBL" id="CP002686">
    <property type="protein sequence ID" value="AEE78709.1"/>
    <property type="molecule type" value="Genomic_DNA"/>
</dbReference>
<dbReference type="EMBL" id="CP002686">
    <property type="protein sequence ID" value="ANM64756.1"/>
    <property type="molecule type" value="Genomic_DNA"/>
</dbReference>
<dbReference type="EMBL" id="BT002970">
    <property type="protein sequence ID" value="AAO22779.1"/>
    <property type="molecule type" value="mRNA"/>
</dbReference>
<dbReference type="EMBL" id="BT005113">
    <property type="protein sequence ID" value="AAO50646.1"/>
    <property type="molecule type" value="mRNA"/>
</dbReference>
<dbReference type="PIR" id="T08399">
    <property type="entry name" value="T08399"/>
</dbReference>
<dbReference type="RefSeq" id="NP_001326763.1">
    <property type="nucleotide sequence ID" value="NM_001339480.1"/>
</dbReference>
<dbReference type="RefSeq" id="NP_190647.1">
    <property type="nucleotide sequence ID" value="NM_114938.4"/>
</dbReference>
<dbReference type="SMR" id="Q9SVM0"/>
<dbReference type="BioGRID" id="9560">
    <property type="interactions" value="1"/>
</dbReference>
<dbReference type="FunCoup" id="Q9SVM0">
    <property type="interactions" value="2382"/>
</dbReference>
<dbReference type="IntAct" id="Q9SVM0">
    <property type="interactions" value="1"/>
</dbReference>
<dbReference type="STRING" id="3702.Q9SVM0"/>
<dbReference type="GlyGen" id="Q9SVM0">
    <property type="glycosylation" value="1 site"/>
</dbReference>
<dbReference type="iPTMnet" id="Q9SVM0"/>
<dbReference type="PaxDb" id="3702-AT3G50780.1"/>
<dbReference type="ProteomicsDB" id="232360"/>
<dbReference type="EnsemblPlants" id="AT3G50780.1">
    <property type="protein sequence ID" value="AT3G50780.1"/>
    <property type="gene ID" value="AT3G50780"/>
</dbReference>
<dbReference type="EnsemblPlants" id="AT3G50780.2">
    <property type="protein sequence ID" value="AT3G50780.2"/>
    <property type="gene ID" value="AT3G50780"/>
</dbReference>
<dbReference type="GeneID" id="824242"/>
<dbReference type="Gramene" id="AT3G50780.1">
    <property type="protein sequence ID" value="AT3G50780.1"/>
    <property type="gene ID" value="AT3G50780"/>
</dbReference>
<dbReference type="Gramene" id="AT3G50780.2">
    <property type="protein sequence ID" value="AT3G50780.2"/>
    <property type="gene ID" value="AT3G50780"/>
</dbReference>
<dbReference type="KEGG" id="ath:AT3G50780"/>
<dbReference type="Araport" id="AT3G50780"/>
<dbReference type="TAIR" id="AT3G50780"/>
<dbReference type="eggNOG" id="ENOG502QUCJ">
    <property type="taxonomic scope" value="Eukaryota"/>
</dbReference>
<dbReference type="HOGENOM" id="CLU_025834_0_1_1"/>
<dbReference type="InParanoid" id="Q9SVM0"/>
<dbReference type="OMA" id="RLMKQNV"/>
<dbReference type="PhylomeDB" id="Q9SVM0"/>
<dbReference type="UniPathway" id="UPA00143"/>
<dbReference type="PRO" id="PR:Q9SVM0"/>
<dbReference type="Proteomes" id="UP000006548">
    <property type="component" value="Chromosome 3"/>
</dbReference>
<dbReference type="ExpressionAtlas" id="Q9SVM0">
    <property type="expression patterns" value="baseline and differential"/>
</dbReference>
<dbReference type="GO" id="GO:0016567">
    <property type="term" value="P:protein ubiquitination"/>
    <property type="evidence" value="ECO:0007669"/>
    <property type="project" value="UniProtKB-UniPathway"/>
</dbReference>
<dbReference type="InterPro" id="IPR038920">
    <property type="entry name" value="BTB/POZ_dom_prot"/>
</dbReference>
<dbReference type="PANTHER" id="PTHR31060">
    <property type="entry name" value="OSJNBA0011J08.25 PROTEIN-RELATED"/>
    <property type="match status" value="1"/>
</dbReference>
<dbReference type="PANTHER" id="PTHR31060:SF5">
    <property type="entry name" value="PRLI-INTERACTING FACTOR G, PUTATIVE, EXPRESSED-RELATED"/>
    <property type="match status" value="1"/>
</dbReference>
<feature type="chain" id="PRO_0000408530" description="BTB/POZ domain-containing protein At3g50780">
    <location>
        <begin position="1"/>
        <end position="520"/>
    </location>
</feature>
<feature type="domain" description="BTB">
    <location>
        <begin position="127"/>
        <end position="196"/>
    </location>
</feature>
<feature type="region of interest" description="Disordered" evidence="2">
    <location>
        <begin position="43"/>
        <end position="68"/>
    </location>
</feature>
<reference key="1">
    <citation type="journal article" date="2000" name="Nature">
        <title>Sequence and analysis of chromosome 3 of the plant Arabidopsis thaliana.</title>
        <authorList>
            <person name="Salanoubat M."/>
            <person name="Lemcke K."/>
            <person name="Rieger M."/>
            <person name="Ansorge W."/>
            <person name="Unseld M."/>
            <person name="Fartmann B."/>
            <person name="Valle G."/>
            <person name="Bloecker H."/>
            <person name="Perez-Alonso M."/>
            <person name="Obermaier B."/>
            <person name="Delseny M."/>
            <person name="Boutry M."/>
            <person name="Grivell L.A."/>
            <person name="Mache R."/>
            <person name="Puigdomenech P."/>
            <person name="De Simone V."/>
            <person name="Choisne N."/>
            <person name="Artiguenave F."/>
            <person name="Robert C."/>
            <person name="Brottier P."/>
            <person name="Wincker P."/>
            <person name="Cattolico L."/>
            <person name="Weissenbach J."/>
            <person name="Saurin W."/>
            <person name="Quetier F."/>
            <person name="Schaefer M."/>
            <person name="Mueller-Auer S."/>
            <person name="Gabel C."/>
            <person name="Fuchs M."/>
            <person name="Benes V."/>
            <person name="Wurmbach E."/>
            <person name="Drzonek H."/>
            <person name="Erfle H."/>
            <person name="Jordan N."/>
            <person name="Bangert S."/>
            <person name="Wiedelmann R."/>
            <person name="Kranz H."/>
            <person name="Voss H."/>
            <person name="Holland R."/>
            <person name="Brandt P."/>
            <person name="Nyakatura G."/>
            <person name="Vezzi A."/>
            <person name="D'Angelo M."/>
            <person name="Pallavicini A."/>
            <person name="Toppo S."/>
            <person name="Simionati B."/>
            <person name="Conrad A."/>
            <person name="Hornischer K."/>
            <person name="Kauer G."/>
            <person name="Loehnert T.-H."/>
            <person name="Nordsiek G."/>
            <person name="Reichelt J."/>
            <person name="Scharfe M."/>
            <person name="Schoen O."/>
            <person name="Bargues M."/>
            <person name="Terol J."/>
            <person name="Climent J."/>
            <person name="Navarro P."/>
            <person name="Collado C."/>
            <person name="Perez-Perez A."/>
            <person name="Ottenwaelder B."/>
            <person name="Duchemin D."/>
            <person name="Cooke R."/>
            <person name="Laudie M."/>
            <person name="Berger-Llauro C."/>
            <person name="Purnelle B."/>
            <person name="Masuy D."/>
            <person name="de Haan M."/>
            <person name="Maarse A.C."/>
            <person name="Alcaraz J.-P."/>
            <person name="Cottet A."/>
            <person name="Casacuberta E."/>
            <person name="Monfort A."/>
            <person name="Argiriou A."/>
            <person name="Flores M."/>
            <person name="Liguori R."/>
            <person name="Vitale D."/>
            <person name="Mannhaupt G."/>
            <person name="Haase D."/>
            <person name="Schoof H."/>
            <person name="Rudd S."/>
            <person name="Zaccaria P."/>
            <person name="Mewes H.-W."/>
            <person name="Mayer K.F.X."/>
            <person name="Kaul S."/>
            <person name="Town C.D."/>
            <person name="Koo H.L."/>
            <person name="Tallon L.J."/>
            <person name="Jenkins J."/>
            <person name="Rooney T."/>
            <person name="Rizzo M."/>
            <person name="Walts A."/>
            <person name="Utterback T."/>
            <person name="Fujii C.Y."/>
            <person name="Shea T.P."/>
            <person name="Creasy T.H."/>
            <person name="Haas B."/>
            <person name="Maiti R."/>
            <person name="Wu D."/>
            <person name="Peterson J."/>
            <person name="Van Aken S."/>
            <person name="Pai G."/>
            <person name="Militscher J."/>
            <person name="Sellers P."/>
            <person name="Gill J.E."/>
            <person name="Feldblyum T.V."/>
            <person name="Preuss D."/>
            <person name="Lin X."/>
            <person name="Nierman W.C."/>
            <person name="Salzberg S.L."/>
            <person name="White O."/>
            <person name="Venter J.C."/>
            <person name="Fraser C.M."/>
            <person name="Kaneko T."/>
            <person name="Nakamura Y."/>
            <person name="Sato S."/>
            <person name="Kato T."/>
            <person name="Asamizu E."/>
            <person name="Sasamoto S."/>
            <person name="Kimura T."/>
            <person name="Idesawa K."/>
            <person name="Kawashima K."/>
            <person name="Kishida Y."/>
            <person name="Kiyokawa C."/>
            <person name="Kohara M."/>
            <person name="Matsumoto M."/>
            <person name="Matsuno A."/>
            <person name="Muraki A."/>
            <person name="Nakayama S."/>
            <person name="Nakazaki N."/>
            <person name="Shinpo S."/>
            <person name="Takeuchi C."/>
            <person name="Wada T."/>
            <person name="Watanabe A."/>
            <person name="Yamada M."/>
            <person name="Yasuda M."/>
            <person name="Tabata S."/>
        </authorList>
    </citation>
    <scope>NUCLEOTIDE SEQUENCE [LARGE SCALE GENOMIC DNA]</scope>
    <source>
        <strain>cv. Columbia</strain>
    </source>
</reference>
<reference key="2">
    <citation type="journal article" date="2017" name="Plant J.">
        <title>Araport11: a complete reannotation of the Arabidopsis thaliana reference genome.</title>
        <authorList>
            <person name="Cheng C.Y."/>
            <person name="Krishnakumar V."/>
            <person name="Chan A.P."/>
            <person name="Thibaud-Nissen F."/>
            <person name="Schobel S."/>
            <person name="Town C.D."/>
        </authorList>
    </citation>
    <scope>GENOME REANNOTATION</scope>
    <source>
        <strain>cv. Columbia</strain>
    </source>
</reference>
<reference key="3">
    <citation type="journal article" date="2003" name="Science">
        <title>Empirical analysis of transcriptional activity in the Arabidopsis genome.</title>
        <authorList>
            <person name="Yamada K."/>
            <person name="Lim J."/>
            <person name="Dale J.M."/>
            <person name="Chen H."/>
            <person name="Shinn P."/>
            <person name="Palm C.J."/>
            <person name="Southwick A.M."/>
            <person name="Wu H.C."/>
            <person name="Kim C.J."/>
            <person name="Nguyen M."/>
            <person name="Pham P.K."/>
            <person name="Cheuk R.F."/>
            <person name="Karlin-Newmann G."/>
            <person name="Liu S.X."/>
            <person name="Lam B."/>
            <person name="Sakano H."/>
            <person name="Wu T."/>
            <person name="Yu G."/>
            <person name="Miranda M."/>
            <person name="Quach H.L."/>
            <person name="Tripp M."/>
            <person name="Chang C.H."/>
            <person name="Lee J.M."/>
            <person name="Toriumi M.J."/>
            <person name="Chan M.M."/>
            <person name="Tang C.C."/>
            <person name="Onodera C.S."/>
            <person name="Deng J.M."/>
            <person name="Akiyama K."/>
            <person name="Ansari Y."/>
            <person name="Arakawa T."/>
            <person name="Banh J."/>
            <person name="Banno F."/>
            <person name="Bowser L."/>
            <person name="Brooks S.Y."/>
            <person name="Carninci P."/>
            <person name="Chao Q."/>
            <person name="Choy N."/>
            <person name="Enju A."/>
            <person name="Goldsmith A.D."/>
            <person name="Gurjal M."/>
            <person name="Hansen N.F."/>
            <person name="Hayashizaki Y."/>
            <person name="Johnson-Hopson C."/>
            <person name="Hsuan V.W."/>
            <person name="Iida K."/>
            <person name="Karnes M."/>
            <person name="Khan S."/>
            <person name="Koesema E."/>
            <person name="Ishida J."/>
            <person name="Jiang P.X."/>
            <person name="Jones T."/>
            <person name="Kawai J."/>
            <person name="Kamiya A."/>
            <person name="Meyers C."/>
            <person name="Nakajima M."/>
            <person name="Narusaka M."/>
            <person name="Seki M."/>
            <person name="Sakurai T."/>
            <person name="Satou M."/>
            <person name="Tamse R."/>
            <person name="Vaysberg M."/>
            <person name="Wallender E.K."/>
            <person name="Wong C."/>
            <person name="Yamamura Y."/>
            <person name="Yuan S."/>
            <person name="Shinozaki K."/>
            <person name="Davis R.W."/>
            <person name="Theologis A."/>
            <person name="Ecker J.R."/>
        </authorList>
    </citation>
    <scope>NUCLEOTIDE SEQUENCE [LARGE SCALE MRNA]</scope>
    <source>
        <strain>cv. Columbia</strain>
    </source>
</reference>
<reference key="4">
    <citation type="journal article" date="2005" name="J. Biol. Chem.">
        <title>Cullins 3a and 3b assemble with members of the broad complex/tramtrack/bric-a-brac (BTB) protein family to form essential ubiquitin-protein ligases (E3s) in Arabidopsis.</title>
        <authorList>
            <person name="Gingerich D.J."/>
            <person name="Gagne J.M."/>
            <person name="Salter D.W."/>
            <person name="Hellmann H."/>
            <person name="Estelle M."/>
            <person name="Ma L."/>
            <person name="Vierstra R.D."/>
        </authorList>
    </citation>
    <scope>DOMAIN BTB</scope>
</reference>
<organism>
    <name type="scientific">Arabidopsis thaliana</name>
    <name type="common">Mouse-ear cress</name>
    <dbReference type="NCBI Taxonomy" id="3702"/>
    <lineage>
        <taxon>Eukaryota</taxon>
        <taxon>Viridiplantae</taxon>
        <taxon>Streptophyta</taxon>
        <taxon>Embryophyta</taxon>
        <taxon>Tracheophyta</taxon>
        <taxon>Spermatophyta</taxon>
        <taxon>Magnoliopsida</taxon>
        <taxon>eudicotyledons</taxon>
        <taxon>Gunneridae</taxon>
        <taxon>Pentapetalae</taxon>
        <taxon>rosids</taxon>
        <taxon>malvids</taxon>
        <taxon>Brassicales</taxon>
        <taxon>Brassicaceae</taxon>
        <taxon>Camelineae</taxon>
        <taxon>Arabidopsis</taxon>
    </lineage>
</organism>
<protein>
    <recommendedName>
        <fullName>BTB/POZ domain-containing protein At3g50780</fullName>
    </recommendedName>
</protein>
<gene>
    <name type="ordered locus">At3g50780</name>
    <name type="ORF">F18B3.60</name>
</gene>
<sequence>MAEIKNAKVEQRQTKIRNVPVAVTPEGFWCCPSPVAFQKTLKSHNSLTKHKQSSPALQPPKPEKKPSSTTIRSVIASDETQQNLGSFDTVHSIAVPATVQERPQRQKVETLPRKVAIEFGEPGSSDAKVILVGKQGFCVKLSVHKKVLVDHSCFFAKKLAEKDSVFACLEIESCEDAELYVETIGLMYCKDMKQRLMKQNVSRVLRVLKVAELLGFSSCIQSCLDYLEAVPWVGEEEEEKVISSILRLKTEGVGVTPVLKRVASNAVDPPKETLSRIIELVLRSKEEKSRREMKSIVLKLLREQNGANVADNFNDTIYSSCQTCLDSVLSLFKQASEGEKPETDTKQIAVEADNLTWLLDVLAERQAAEEFSVTWANQKELALLHEKLPLMSRYHISRVTSRLFIGIGRGELLPSKDTRLLLLTTWLQPLFNDYNWLQHGCRSFDGKLVEEGIGRTILTLPLEDQQSILLSWLGSFLNGGDGCPNLQRAFEVWWRRSFIRPYSDRQANGSCQTDSTSKEE</sequence>
<comment type="function">
    <text evidence="1">May act as a substrate-specific adapter of an E3 ubiquitin-protein ligase complex (CUL3-RBX1-BTB) which mediates the ubiquitination and subsequent proteasomal degradation of target proteins.</text>
</comment>
<comment type="pathway">
    <text>Protein modification; protein ubiquitination.</text>
</comment>
<comment type="domain">
    <text evidence="3">The BTB/POZ domain mediates the interaction with some component of ubiquitin ligase complexes.</text>
</comment>
<name>Y3078_ARATH</name>
<evidence type="ECO:0000250" key="1"/>
<evidence type="ECO:0000256" key="2">
    <source>
        <dbReference type="SAM" id="MobiDB-lite"/>
    </source>
</evidence>
<evidence type="ECO:0000269" key="3">
    <source>
    </source>
</evidence>
<proteinExistence type="evidence at transcript level"/>